<comment type="function">
    <text evidence="1">Catalyzes the attachment of the second N-acetyl-N-hydroxylysine to the carboxylic group of N-citryl-N-acetyl-N-hydroxylysine to yield aerobactin. Involved in the biosynthesis of the siderophore aerobactin which is a chelator that mediates the high-affinity iron transport systems induced under iron-stressed conditions.</text>
</comment>
<comment type="catalytic activity">
    <reaction evidence="1">
        <text>N(2)-citryl-N(6)-acetyl-N(6)-hydroxy-L-lysine + N(6)-acetyl-N(6)-hydroxy-L-lysine + ATP = aerobactin + AMP + diphosphate + H(+)</text>
        <dbReference type="Rhea" id="RHEA:32167"/>
        <dbReference type="ChEBI" id="CHEBI:15378"/>
        <dbReference type="ChEBI" id="CHEBI:30616"/>
        <dbReference type="ChEBI" id="CHEBI:33019"/>
        <dbReference type="ChEBI" id="CHEBI:58122"/>
        <dbReference type="ChEBI" id="CHEBI:58396"/>
        <dbReference type="ChEBI" id="CHEBI:63796"/>
        <dbReference type="ChEBI" id="CHEBI:456215"/>
        <dbReference type="EC" id="6.3.2.39"/>
    </reaction>
</comment>
<comment type="pathway">
    <text>Siderophore biosynthesis; aerobactin biosynthesis.</text>
</comment>
<comment type="similarity">
    <text evidence="2">Belongs to the IucA/IucC family.</text>
</comment>
<reference key="1">
    <citation type="journal article" date="2004" name="Microbiol. Immunol.">
        <title>Identification and characterization of two contiguous operons required for aerobactin transport and biosynthesis in Vibrio mimicus.</title>
        <authorList>
            <person name="Moon Y.H."/>
            <person name="Tanabe T."/>
            <person name="Funahashi T."/>
            <person name="Shiuchi K."/>
            <person name="Nakao H."/>
            <person name="Yamamoto S."/>
        </authorList>
    </citation>
    <scope>NUCLEOTIDE SEQUENCE [GENOMIC DNA]</scope>
    <scope>FUNCTION</scope>
    <scope>CATALYTIC ACTIVITY</scope>
    <source>
        <strain>7PT</strain>
    </source>
</reference>
<feature type="chain" id="PRO_0000418721" description="Aerobactin synthase">
    <location>
        <begin position="1"/>
        <end position="591"/>
    </location>
</feature>
<sequence length="591" mass="67163">MVMDQLALHRYWAVANQKMVGKILSEFAYEQAFQFEPTAQGYQLNLENGTRYCFAGEENIWGQVMIDPTSITRHAEIEADEPISAALLMRDLQPLLKMPDDAFAEHLEDLNATLLGDCKLMQRNEAITARDLAMLPCEQQQTYFDGHPKFVFNKGRRGWGSDDLKRYAPEAERVSNWVGSRFITRFCSSPPTMKSHGKPCCKAPSRPMKSSRWTVCWLPISLDSTIIVMFRFILWQWSNKLALLFVREIATKQLVYLGEFGDHFLPQLSLRTLSNVTRPAGYDIKLPLTVMNTSCYRGIPGRYILAGPTASDWIDQVFKSDPLLIAKQAEVLQEPAAAFAAQADYALLPNAPYRYHELLGVIWRESAASKLKAGERAILMAALMESDNQGQPLIAEYVQASGLTLEAWLSKLFDAVVIPYYHLLCNYGVSLIAHGQNVTLVLENHAPKRILLKDFQGDMRLVSREYPEQASLDDSVKKVTVRLPEHLIIHDLQTGHFVTTLRFISPLVAKLGFSEPQFYRLLGDRLKAYMAAHREYQPRFEQFDLFKPRILRIGLNLAKFRHSTDASASRMLPDMDDMLNNPLTKALEHQG</sequence>
<keyword id="KW-0067">ATP-binding</keyword>
<keyword id="KW-0436">Ligase</keyword>
<keyword id="KW-0547">Nucleotide-binding</keyword>
<keyword id="KW-0808">Transferase</keyword>
<proteinExistence type="evidence at protein level"/>
<gene>
    <name type="primary">iucC</name>
</gene>
<dbReference type="EC" id="6.3.2.39"/>
<dbReference type="EMBL" id="AB110784">
    <property type="protein sequence ID" value="BAD02219.1"/>
    <property type="molecule type" value="Genomic_DNA"/>
</dbReference>
<dbReference type="SMR" id="Q76BS5"/>
<dbReference type="STRING" id="674.VM_09620"/>
<dbReference type="UniPathway" id="UPA00014"/>
<dbReference type="GO" id="GO:0050565">
    <property type="term" value="F:aerobactin synthase activity"/>
    <property type="evidence" value="ECO:0007669"/>
    <property type="project" value="RHEA"/>
</dbReference>
<dbReference type="GO" id="GO:0005524">
    <property type="term" value="F:ATP binding"/>
    <property type="evidence" value="ECO:0007669"/>
    <property type="project" value="UniProtKB-KW"/>
</dbReference>
<dbReference type="GO" id="GO:0016740">
    <property type="term" value="F:transferase activity"/>
    <property type="evidence" value="ECO:0007669"/>
    <property type="project" value="UniProtKB-KW"/>
</dbReference>
<dbReference type="GO" id="GO:0019270">
    <property type="term" value="P:aerobactin biosynthetic process"/>
    <property type="evidence" value="ECO:0007669"/>
    <property type="project" value="UniProtKB-UniPathway"/>
</dbReference>
<dbReference type="GO" id="GO:0019290">
    <property type="term" value="P:siderophore biosynthetic process"/>
    <property type="evidence" value="ECO:0007669"/>
    <property type="project" value="InterPro"/>
</dbReference>
<dbReference type="Gene3D" id="1.10.510.40">
    <property type="match status" value="1"/>
</dbReference>
<dbReference type="Gene3D" id="3.30.310.280">
    <property type="match status" value="1"/>
</dbReference>
<dbReference type="Gene3D" id="6.10.250.3370">
    <property type="match status" value="1"/>
</dbReference>
<dbReference type="InterPro" id="IPR007310">
    <property type="entry name" value="Aerobactin_biosyn_IucA/IucC_N"/>
</dbReference>
<dbReference type="InterPro" id="IPR022770">
    <property type="entry name" value="IucA/IucC-like_C"/>
</dbReference>
<dbReference type="InterPro" id="IPR037455">
    <property type="entry name" value="LucA/IucC-like"/>
</dbReference>
<dbReference type="PANTHER" id="PTHR34384">
    <property type="entry name" value="L-2,3-DIAMINOPROPANOATE--CITRATE LIGASE"/>
    <property type="match status" value="1"/>
</dbReference>
<dbReference type="PANTHER" id="PTHR34384:SF6">
    <property type="entry name" value="STAPHYLOFERRIN B SYNTHASE"/>
    <property type="match status" value="1"/>
</dbReference>
<dbReference type="Pfam" id="PF06276">
    <property type="entry name" value="FhuF"/>
    <property type="match status" value="1"/>
</dbReference>
<dbReference type="Pfam" id="PF04183">
    <property type="entry name" value="IucA_IucC"/>
    <property type="match status" value="2"/>
</dbReference>
<organism>
    <name type="scientific">Vibrio mimicus</name>
    <dbReference type="NCBI Taxonomy" id="674"/>
    <lineage>
        <taxon>Bacteria</taxon>
        <taxon>Pseudomonadati</taxon>
        <taxon>Pseudomonadota</taxon>
        <taxon>Gammaproteobacteria</taxon>
        <taxon>Vibrionales</taxon>
        <taxon>Vibrionaceae</taxon>
        <taxon>Vibrio</taxon>
    </lineage>
</organism>
<name>IUCC_VIBMI</name>
<accession>Q76BS5</accession>
<protein>
    <recommendedName>
        <fullName>Aerobactin synthase</fullName>
        <ecNumber>6.3.2.39</ecNumber>
    </recommendedName>
</protein>
<evidence type="ECO:0000269" key="1">
    <source>
    </source>
</evidence>
<evidence type="ECO:0000305" key="2"/>